<proteinExistence type="inferred from homology"/>
<sequence length="100" mass="11180">MISLFHGLFLSLILFILGLTSLIVRRNILFILISLEIMMNAVGLALIVVGSYWHQADGQIMYIFVITLAASEASIALALLLQLYRRKKTLNIDILSEMNG</sequence>
<gene>
    <name evidence="1" type="primary">nuoK</name>
    <name type="ordered locus">BUAP5A_161</name>
</gene>
<keyword id="KW-1003">Cell membrane</keyword>
<keyword id="KW-0472">Membrane</keyword>
<keyword id="KW-0520">NAD</keyword>
<keyword id="KW-0874">Quinone</keyword>
<keyword id="KW-1278">Translocase</keyword>
<keyword id="KW-0812">Transmembrane</keyword>
<keyword id="KW-1133">Transmembrane helix</keyword>
<keyword id="KW-0813">Transport</keyword>
<keyword id="KW-0830">Ubiquinone</keyword>
<comment type="function">
    <text evidence="1">NDH-1 shuttles electrons from NADH, via FMN and iron-sulfur (Fe-S) centers, to quinones in the respiratory chain. The immediate electron acceptor for the enzyme in this species is believed to be ubiquinone. Couples the redox reaction to proton translocation (for every two electrons transferred, four hydrogen ions are translocated across the cytoplasmic membrane), and thus conserves the redox energy in a proton gradient.</text>
</comment>
<comment type="catalytic activity">
    <reaction evidence="1">
        <text>a quinone + NADH + 5 H(+)(in) = a quinol + NAD(+) + 4 H(+)(out)</text>
        <dbReference type="Rhea" id="RHEA:57888"/>
        <dbReference type="ChEBI" id="CHEBI:15378"/>
        <dbReference type="ChEBI" id="CHEBI:24646"/>
        <dbReference type="ChEBI" id="CHEBI:57540"/>
        <dbReference type="ChEBI" id="CHEBI:57945"/>
        <dbReference type="ChEBI" id="CHEBI:132124"/>
    </reaction>
</comment>
<comment type="subunit">
    <text evidence="1">NDH-1 is composed of 13 different subunits. Subunits NuoA, H, J, K, L, M, N constitute the membrane sector of the complex.</text>
</comment>
<comment type="subcellular location">
    <subcellularLocation>
        <location evidence="1">Cell membrane</location>
        <topology evidence="1">Multi-pass membrane protein</topology>
    </subcellularLocation>
</comment>
<comment type="similarity">
    <text evidence="1">Belongs to the complex I subunit 4L family.</text>
</comment>
<reference key="1">
    <citation type="journal article" date="2009" name="Science">
        <title>The dynamics and time scale of ongoing genomic erosion in symbiotic bacteria.</title>
        <authorList>
            <person name="Moran N.A."/>
            <person name="McLaughlin H.J."/>
            <person name="Sorek R."/>
        </authorList>
    </citation>
    <scope>NUCLEOTIDE SEQUENCE [LARGE SCALE GENOMIC DNA]</scope>
    <source>
        <strain>5A</strain>
    </source>
</reference>
<dbReference type="EC" id="7.1.1.-" evidence="1"/>
<dbReference type="EMBL" id="CP001161">
    <property type="protein sequence ID" value="ACL30536.1"/>
    <property type="molecule type" value="Genomic_DNA"/>
</dbReference>
<dbReference type="RefSeq" id="WP_009874119.1">
    <property type="nucleotide sequence ID" value="NC_011833.1"/>
</dbReference>
<dbReference type="SMR" id="B8D8W4"/>
<dbReference type="KEGG" id="bap:BUAP5A_161"/>
<dbReference type="HOGENOM" id="CLU_144724_0_1_6"/>
<dbReference type="OrthoDB" id="9801357at2"/>
<dbReference type="Proteomes" id="UP000006904">
    <property type="component" value="Chromosome"/>
</dbReference>
<dbReference type="GO" id="GO:0030964">
    <property type="term" value="C:NADH dehydrogenase complex"/>
    <property type="evidence" value="ECO:0007669"/>
    <property type="project" value="TreeGrafter"/>
</dbReference>
<dbReference type="GO" id="GO:0005886">
    <property type="term" value="C:plasma membrane"/>
    <property type="evidence" value="ECO:0007669"/>
    <property type="project" value="UniProtKB-SubCell"/>
</dbReference>
<dbReference type="GO" id="GO:0050136">
    <property type="term" value="F:NADH:ubiquinone reductase (non-electrogenic) activity"/>
    <property type="evidence" value="ECO:0007669"/>
    <property type="project" value="UniProtKB-UniRule"/>
</dbReference>
<dbReference type="GO" id="GO:0048038">
    <property type="term" value="F:quinone binding"/>
    <property type="evidence" value="ECO:0007669"/>
    <property type="project" value="UniProtKB-KW"/>
</dbReference>
<dbReference type="GO" id="GO:0042773">
    <property type="term" value="P:ATP synthesis coupled electron transport"/>
    <property type="evidence" value="ECO:0007669"/>
    <property type="project" value="InterPro"/>
</dbReference>
<dbReference type="FunFam" id="1.10.287.3510:FF:000001">
    <property type="entry name" value="NADH-quinone oxidoreductase subunit K"/>
    <property type="match status" value="1"/>
</dbReference>
<dbReference type="Gene3D" id="1.10.287.3510">
    <property type="match status" value="1"/>
</dbReference>
<dbReference type="HAMAP" id="MF_01456">
    <property type="entry name" value="NDH1_NuoK"/>
    <property type="match status" value="1"/>
</dbReference>
<dbReference type="InterPro" id="IPR001133">
    <property type="entry name" value="NADH_UbQ_OxRdtase_chain4L/K"/>
</dbReference>
<dbReference type="InterPro" id="IPR039428">
    <property type="entry name" value="NUOK/Mnh_C1-like"/>
</dbReference>
<dbReference type="NCBIfam" id="NF004319">
    <property type="entry name" value="PRK05715.1-1"/>
    <property type="match status" value="1"/>
</dbReference>
<dbReference type="NCBIfam" id="NF004320">
    <property type="entry name" value="PRK05715.1-2"/>
    <property type="match status" value="1"/>
</dbReference>
<dbReference type="PANTHER" id="PTHR11434:SF16">
    <property type="entry name" value="NADH-UBIQUINONE OXIDOREDUCTASE CHAIN 4L"/>
    <property type="match status" value="1"/>
</dbReference>
<dbReference type="PANTHER" id="PTHR11434">
    <property type="entry name" value="NADH-UBIQUINONE OXIDOREDUCTASE SUBUNIT ND4L"/>
    <property type="match status" value="1"/>
</dbReference>
<dbReference type="Pfam" id="PF00420">
    <property type="entry name" value="Oxidored_q2"/>
    <property type="match status" value="1"/>
</dbReference>
<organism>
    <name type="scientific">Buchnera aphidicola subsp. Acyrthosiphon pisum (strain 5A)</name>
    <dbReference type="NCBI Taxonomy" id="563178"/>
    <lineage>
        <taxon>Bacteria</taxon>
        <taxon>Pseudomonadati</taxon>
        <taxon>Pseudomonadota</taxon>
        <taxon>Gammaproteobacteria</taxon>
        <taxon>Enterobacterales</taxon>
        <taxon>Erwiniaceae</taxon>
        <taxon>Buchnera</taxon>
    </lineage>
</organism>
<name>NUOK_BUCA5</name>
<protein>
    <recommendedName>
        <fullName evidence="1">NADH-quinone oxidoreductase subunit K</fullName>
        <ecNumber evidence="1">7.1.1.-</ecNumber>
    </recommendedName>
    <alternativeName>
        <fullName evidence="1">NADH dehydrogenase I subunit K</fullName>
    </alternativeName>
    <alternativeName>
        <fullName evidence="1">NDH-1 subunit K</fullName>
    </alternativeName>
</protein>
<evidence type="ECO:0000255" key="1">
    <source>
        <dbReference type="HAMAP-Rule" id="MF_01456"/>
    </source>
</evidence>
<feature type="chain" id="PRO_0000389979" description="NADH-quinone oxidoreductase subunit K">
    <location>
        <begin position="1"/>
        <end position="100"/>
    </location>
</feature>
<feature type="transmembrane region" description="Helical" evidence="1">
    <location>
        <begin position="4"/>
        <end position="24"/>
    </location>
</feature>
<feature type="transmembrane region" description="Helical" evidence="1">
    <location>
        <begin position="28"/>
        <end position="48"/>
    </location>
</feature>
<feature type="transmembrane region" description="Helical" evidence="1">
    <location>
        <begin position="60"/>
        <end position="80"/>
    </location>
</feature>
<accession>B8D8W4</accession>